<keyword id="KW-0025">Alternative splicing</keyword>
<keyword id="KW-0963">Cytoplasm</keyword>
<keyword id="KW-1185">Reference proteome</keyword>
<proteinExistence type="evidence at protein level"/>
<protein>
    <recommendedName>
        <fullName>N-alpha-acetyltransferase 35, NatC auxiliary subunit homolog</fullName>
    </recommendedName>
    <alternativeName>
        <fullName>Embryonic growth-associated protein homolog</fullName>
    </alternativeName>
    <alternativeName>
        <fullName>Protein MAK10 homolog</fullName>
    </alternativeName>
</protein>
<accession>Q9W1A2</accession>
<accession>Q59E64</accession>
<accession>Q8T3X5</accession>
<evidence type="ECO:0000250" key="1">
    <source>
        <dbReference type="UniProtKB" id="Q5VZE5"/>
    </source>
</evidence>
<evidence type="ECO:0000256" key="2">
    <source>
        <dbReference type="SAM" id="MobiDB-lite"/>
    </source>
</evidence>
<evidence type="ECO:0000269" key="3">
    <source>
    </source>
</evidence>
<evidence type="ECO:0000303" key="4">
    <source>
    </source>
</evidence>
<evidence type="ECO:0000305" key="5"/>
<evidence type="ECO:0000312" key="6">
    <source>
        <dbReference type="FlyBase" id="FBgn0034982"/>
    </source>
</evidence>
<dbReference type="EMBL" id="AE013599">
    <property type="protein sequence ID" value="AAX52681.1"/>
    <property type="molecule type" value="Genomic_DNA"/>
</dbReference>
<dbReference type="EMBL" id="AE013599">
    <property type="protein sequence ID" value="AAF47171.1"/>
    <property type="molecule type" value="Genomic_DNA"/>
</dbReference>
<dbReference type="EMBL" id="AY060948">
    <property type="protein sequence ID" value="AAL28496.1"/>
    <property type="molecule type" value="mRNA"/>
</dbReference>
<dbReference type="EMBL" id="AY089452">
    <property type="protein sequence ID" value="AAL90190.1"/>
    <property type="status" value="ALT_FRAME"/>
    <property type="molecule type" value="mRNA"/>
</dbReference>
<dbReference type="RefSeq" id="NP_001014546.1">
    <molecule id="Q9W1A2-2"/>
    <property type="nucleotide sequence ID" value="NM_001014546.2"/>
</dbReference>
<dbReference type="RefSeq" id="NP_611891.1">
    <molecule id="Q9W1A2-1"/>
    <property type="nucleotide sequence ID" value="NM_138047.3"/>
</dbReference>
<dbReference type="SMR" id="Q9W1A2"/>
<dbReference type="BioGRID" id="63444">
    <property type="interactions" value="3"/>
</dbReference>
<dbReference type="ComplexPortal" id="CPX-7943">
    <property type="entry name" value="NatC N-alpha-acetyltransferase complex"/>
</dbReference>
<dbReference type="ComplexPortal" id="CPX-7961">
    <property type="entry name" value="NatC N-alpha-acetyltransferase complex, testis-specific variant"/>
</dbReference>
<dbReference type="FunCoup" id="Q9W1A2">
    <property type="interactions" value="1723"/>
</dbReference>
<dbReference type="IntAct" id="Q9W1A2">
    <property type="interactions" value="1"/>
</dbReference>
<dbReference type="STRING" id="7227.FBpp0072187"/>
<dbReference type="PaxDb" id="7227-FBpp0072187"/>
<dbReference type="DNASU" id="37866"/>
<dbReference type="EnsemblMetazoa" id="FBtr0072280">
    <molecule id="Q9W1A2-1"/>
    <property type="protein sequence ID" value="FBpp0072187"/>
    <property type="gene ID" value="FBgn0034982"/>
</dbReference>
<dbReference type="EnsemblMetazoa" id="FBtr0100398">
    <molecule id="Q9W1A2-2"/>
    <property type="protein sequence ID" value="FBpp0099812"/>
    <property type="gene ID" value="FBgn0034982"/>
</dbReference>
<dbReference type="GeneID" id="37866"/>
<dbReference type="KEGG" id="dme:Dmel_CG4065"/>
<dbReference type="UCSC" id="CG4065-RA">
    <molecule id="Q9W1A2-1"/>
    <property type="organism name" value="d. melanogaster"/>
</dbReference>
<dbReference type="AGR" id="FB:FBgn0034982"/>
<dbReference type="CTD" id="60560"/>
<dbReference type="FlyBase" id="FBgn0034982">
    <property type="gene designation" value="Naa35"/>
</dbReference>
<dbReference type="VEuPathDB" id="VectorBase:FBgn0034982"/>
<dbReference type="eggNOG" id="KOG2343">
    <property type="taxonomic scope" value="Eukaryota"/>
</dbReference>
<dbReference type="GeneTree" id="ENSGT00390000002445"/>
<dbReference type="InParanoid" id="Q9W1A2"/>
<dbReference type="OMA" id="QMEWIVQ"/>
<dbReference type="OrthoDB" id="269405at2759"/>
<dbReference type="PhylomeDB" id="Q9W1A2"/>
<dbReference type="SignaLink" id="Q9W1A2"/>
<dbReference type="BioGRID-ORCS" id="37866">
    <property type="hits" value="0 hits in 1 CRISPR screen"/>
</dbReference>
<dbReference type="GenomeRNAi" id="37866"/>
<dbReference type="PRO" id="PR:Q9W1A2"/>
<dbReference type="Proteomes" id="UP000000803">
    <property type="component" value="Chromosome 2R"/>
</dbReference>
<dbReference type="Bgee" id="FBgn0034982">
    <property type="expression patterns" value="Expressed in eye disc (Drosophila) and 93 other cell types or tissues"/>
</dbReference>
<dbReference type="ExpressionAtlas" id="Q9W1A2">
    <property type="expression patterns" value="baseline and differential"/>
</dbReference>
<dbReference type="GO" id="GO:0005737">
    <property type="term" value="C:cytoplasm"/>
    <property type="evidence" value="ECO:0000250"/>
    <property type="project" value="UniProtKB"/>
</dbReference>
<dbReference type="GO" id="GO:0031417">
    <property type="term" value="C:NatC complex"/>
    <property type="evidence" value="ECO:0000314"/>
    <property type="project" value="UniProtKB"/>
</dbReference>
<dbReference type="GO" id="GO:0043066">
    <property type="term" value="P:negative regulation of apoptotic process"/>
    <property type="evidence" value="ECO:0000318"/>
    <property type="project" value="GO_Central"/>
</dbReference>
<dbReference type="InterPro" id="IPR007244">
    <property type="entry name" value="Naa35/Mak10"/>
</dbReference>
<dbReference type="PANTHER" id="PTHR21373">
    <property type="entry name" value="GLUCOSE REPRESSIBLE PROTEIN MAK10"/>
    <property type="match status" value="1"/>
</dbReference>
<dbReference type="PANTHER" id="PTHR21373:SF0">
    <property type="entry name" value="N-ALPHA-ACETYLTRANSFERASE 35, NATC AUXILIARY SUBUNIT"/>
    <property type="match status" value="1"/>
</dbReference>
<dbReference type="Pfam" id="PF04112">
    <property type="entry name" value="Mak10"/>
    <property type="match status" value="1"/>
</dbReference>
<organism>
    <name type="scientific">Drosophila melanogaster</name>
    <name type="common">Fruit fly</name>
    <dbReference type="NCBI Taxonomy" id="7227"/>
    <lineage>
        <taxon>Eukaryota</taxon>
        <taxon>Metazoa</taxon>
        <taxon>Ecdysozoa</taxon>
        <taxon>Arthropoda</taxon>
        <taxon>Hexapoda</taxon>
        <taxon>Insecta</taxon>
        <taxon>Pterygota</taxon>
        <taxon>Neoptera</taxon>
        <taxon>Endopterygota</taxon>
        <taxon>Diptera</taxon>
        <taxon>Brachycera</taxon>
        <taxon>Muscomorpha</taxon>
        <taxon>Ephydroidea</taxon>
        <taxon>Drosophilidae</taxon>
        <taxon>Drosophila</taxon>
        <taxon>Sophophora</taxon>
    </lineage>
</organism>
<comment type="function">
    <text evidence="1">Auxillary component of the N-terminal acetyltransferase C (NatC) complex which catalyzes acetylation of N-terminal methionine residues.</text>
</comment>
<comment type="subunit">
    <text evidence="3">Component of the N-terminal acetyltransferase C (NatC) complex, which is composed of Naa35, Sbat/Naa38 and Naa30A.</text>
</comment>
<comment type="subcellular location">
    <subcellularLocation>
        <location evidence="1">Cytoplasm</location>
    </subcellularLocation>
</comment>
<comment type="alternative products">
    <event type="alternative splicing"/>
    <isoform>
        <id>Q9W1A2-1</id>
        <name>A</name>
        <sequence type="displayed"/>
    </isoform>
    <isoform>
        <id>Q9W1A2-2</id>
        <name>B</name>
        <sequence type="described" ref="VSP_029040"/>
    </isoform>
</comment>
<comment type="similarity">
    <text evidence="5">Belongs to the MAK10 family.</text>
</comment>
<comment type="sequence caution" evidence="5">
    <conflict type="frameshift">
        <sequence resource="EMBL-CDS" id="AAL90190"/>
    </conflict>
</comment>
<reference key="1">
    <citation type="journal article" date="2000" name="Science">
        <title>The genome sequence of Drosophila melanogaster.</title>
        <authorList>
            <person name="Adams M.D."/>
            <person name="Celniker S.E."/>
            <person name="Holt R.A."/>
            <person name="Evans C.A."/>
            <person name="Gocayne J.D."/>
            <person name="Amanatides P.G."/>
            <person name="Scherer S.E."/>
            <person name="Li P.W."/>
            <person name="Hoskins R.A."/>
            <person name="Galle R.F."/>
            <person name="George R.A."/>
            <person name="Lewis S.E."/>
            <person name="Richards S."/>
            <person name="Ashburner M."/>
            <person name="Henderson S.N."/>
            <person name="Sutton G.G."/>
            <person name="Wortman J.R."/>
            <person name="Yandell M.D."/>
            <person name="Zhang Q."/>
            <person name="Chen L.X."/>
            <person name="Brandon R.C."/>
            <person name="Rogers Y.-H.C."/>
            <person name="Blazej R.G."/>
            <person name="Champe M."/>
            <person name="Pfeiffer B.D."/>
            <person name="Wan K.H."/>
            <person name="Doyle C."/>
            <person name="Baxter E.G."/>
            <person name="Helt G."/>
            <person name="Nelson C.R."/>
            <person name="Miklos G.L.G."/>
            <person name="Abril J.F."/>
            <person name="Agbayani A."/>
            <person name="An H.-J."/>
            <person name="Andrews-Pfannkoch C."/>
            <person name="Baldwin D."/>
            <person name="Ballew R.M."/>
            <person name="Basu A."/>
            <person name="Baxendale J."/>
            <person name="Bayraktaroglu L."/>
            <person name="Beasley E.M."/>
            <person name="Beeson K.Y."/>
            <person name="Benos P.V."/>
            <person name="Berman B.P."/>
            <person name="Bhandari D."/>
            <person name="Bolshakov S."/>
            <person name="Borkova D."/>
            <person name="Botchan M.R."/>
            <person name="Bouck J."/>
            <person name="Brokstein P."/>
            <person name="Brottier P."/>
            <person name="Burtis K.C."/>
            <person name="Busam D.A."/>
            <person name="Butler H."/>
            <person name="Cadieu E."/>
            <person name="Center A."/>
            <person name="Chandra I."/>
            <person name="Cherry J.M."/>
            <person name="Cawley S."/>
            <person name="Dahlke C."/>
            <person name="Davenport L.B."/>
            <person name="Davies P."/>
            <person name="de Pablos B."/>
            <person name="Delcher A."/>
            <person name="Deng Z."/>
            <person name="Mays A.D."/>
            <person name="Dew I."/>
            <person name="Dietz S.M."/>
            <person name="Dodson K."/>
            <person name="Doup L.E."/>
            <person name="Downes M."/>
            <person name="Dugan-Rocha S."/>
            <person name="Dunkov B.C."/>
            <person name="Dunn P."/>
            <person name="Durbin K.J."/>
            <person name="Evangelista C.C."/>
            <person name="Ferraz C."/>
            <person name="Ferriera S."/>
            <person name="Fleischmann W."/>
            <person name="Fosler C."/>
            <person name="Gabrielian A.E."/>
            <person name="Garg N.S."/>
            <person name="Gelbart W.M."/>
            <person name="Glasser K."/>
            <person name="Glodek A."/>
            <person name="Gong F."/>
            <person name="Gorrell J.H."/>
            <person name="Gu Z."/>
            <person name="Guan P."/>
            <person name="Harris M."/>
            <person name="Harris N.L."/>
            <person name="Harvey D.A."/>
            <person name="Heiman T.J."/>
            <person name="Hernandez J.R."/>
            <person name="Houck J."/>
            <person name="Hostin D."/>
            <person name="Houston K.A."/>
            <person name="Howland T.J."/>
            <person name="Wei M.-H."/>
            <person name="Ibegwam C."/>
            <person name="Jalali M."/>
            <person name="Kalush F."/>
            <person name="Karpen G.H."/>
            <person name="Ke Z."/>
            <person name="Kennison J.A."/>
            <person name="Ketchum K.A."/>
            <person name="Kimmel B.E."/>
            <person name="Kodira C.D."/>
            <person name="Kraft C.L."/>
            <person name="Kravitz S."/>
            <person name="Kulp D."/>
            <person name="Lai Z."/>
            <person name="Lasko P."/>
            <person name="Lei Y."/>
            <person name="Levitsky A.A."/>
            <person name="Li J.H."/>
            <person name="Li Z."/>
            <person name="Liang Y."/>
            <person name="Lin X."/>
            <person name="Liu X."/>
            <person name="Mattei B."/>
            <person name="McIntosh T.C."/>
            <person name="McLeod M.P."/>
            <person name="McPherson D."/>
            <person name="Merkulov G."/>
            <person name="Milshina N.V."/>
            <person name="Mobarry C."/>
            <person name="Morris J."/>
            <person name="Moshrefi A."/>
            <person name="Mount S.M."/>
            <person name="Moy M."/>
            <person name="Murphy B."/>
            <person name="Murphy L."/>
            <person name="Muzny D.M."/>
            <person name="Nelson D.L."/>
            <person name="Nelson D.R."/>
            <person name="Nelson K.A."/>
            <person name="Nixon K."/>
            <person name="Nusskern D.R."/>
            <person name="Pacleb J.M."/>
            <person name="Palazzolo M."/>
            <person name="Pittman G.S."/>
            <person name="Pan S."/>
            <person name="Pollard J."/>
            <person name="Puri V."/>
            <person name="Reese M.G."/>
            <person name="Reinert K."/>
            <person name="Remington K."/>
            <person name="Saunders R.D.C."/>
            <person name="Scheeler F."/>
            <person name="Shen H."/>
            <person name="Shue B.C."/>
            <person name="Siden-Kiamos I."/>
            <person name="Simpson M."/>
            <person name="Skupski M.P."/>
            <person name="Smith T.J."/>
            <person name="Spier E."/>
            <person name="Spradling A.C."/>
            <person name="Stapleton M."/>
            <person name="Strong R."/>
            <person name="Sun E."/>
            <person name="Svirskas R."/>
            <person name="Tector C."/>
            <person name="Turner R."/>
            <person name="Venter E."/>
            <person name="Wang A.H."/>
            <person name="Wang X."/>
            <person name="Wang Z.-Y."/>
            <person name="Wassarman D.A."/>
            <person name="Weinstock G.M."/>
            <person name="Weissenbach J."/>
            <person name="Williams S.M."/>
            <person name="Woodage T."/>
            <person name="Worley K.C."/>
            <person name="Wu D."/>
            <person name="Yang S."/>
            <person name="Yao Q.A."/>
            <person name="Ye J."/>
            <person name="Yeh R.-F."/>
            <person name="Zaveri J.S."/>
            <person name="Zhan M."/>
            <person name="Zhang G."/>
            <person name="Zhao Q."/>
            <person name="Zheng L."/>
            <person name="Zheng X.H."/>
            <person name="Zhong F.N."/>
            <person name="Zhong W."/>
            <person name="Zhou X."/>
            <person name="Zhu S.C."/>
            <person name="Zhu X."/>
            <person name="Smith H.O."/>
            <person name="Gibbs R.A."/>
            <person name="Myers E.W."/>
            <person name="Rubin G.M."/>
            <person name="Venter J.C."/>
        </authorList>
    </citation>
    <scope>NUCLEOTIDE SEQUENCE [LARGE SCALE GENOMIC DNA]</scope>
    <source>
        <strain>Berkeley</strain>
    </source>
</reference>
<reference key="2">
    <citation type="journal article" date="2002" name="Genome Biol.">
        <title>Annotation of the Drosophila melanogaster euchromatic genome: a systematic review.</title>
        <authorList>
            <person name="Misra S."/>
            <person name="Crosby M.A."/>
            <person name="Mungall C.J."/>
            <person name="Matthews B.B."/>
            <person name="Campbell K.S."/>
            <person name="Hradecky P."/>
            <person name="Huang Y."/>
            <person name="Kaminker J.S."/>
            <person name="Millburn G.H."/>
            <person name="Prochnik S.E."/>
            <person name="Smith C.D."/>
            <person name="Tupy J.L."/>
            <person name="Whitfield E.J."/>
            <person name="Bayraktaroglu L."/>
            <person name="Berman B.P."/>
            <person name="Bettencourt B.R."/>
            <person name="Celniker S.E."/>
            <person name="de Grey A.D.N.J."/>
            <person name="Drysdale R.A."/>
            <person name="Harris N.L."/>
            <person name="Richter J."/>
            <person name="Russo S."/>
            <person name="Schroeder A.J."/>
            <person name="Shu S.Q."/>
            <person name="Stapleton M."/>
            <person name="Yamada C."/>
            <person name="Ashburner M."/>
            <person name="Gelbart W.M."/>
            <person name="Rubin G.M."/>
            <person name="Lewis S.E."/>
        </authorList>
    </citation>
    <scope>GENOME REANNOTATION</scope>
    <scope>ALTERNATIVE SPLICING (ISOFORMS A AND B)</scope>
    <source>
        <strain>Berkeley</strain>
    </source>
</reference>
<reference key="3">
    <citation type="journal article" date="2002" name="Genome Biol.">
        <title>A Drosophila full-length cDNA resource.</title>
        <authorList>
            <person name="Stapleton M."/>
            <person name="Carlson J.W."/>
            <person name="Brokstein P."/>
            <person name="Yu C."/>
            <person name="Champe M."/>
            <person name="George R.A."/>
            <person name="Guarin H."/>
            <person name="Kronmiller B."/>
            <person name="Pacleb J.M."/>
            <person name="Park S."/>
            <person name="Wan K.H."/>
            <person name="Rubin G.M."/>
            <person name="Celniker S.E."/>
        </authorList>
    </citation>
    <scope>NUCLEOTIDE SEQUENCE [LARGE SCALE MRNA] (ISOFORMS A AND B)</scope>
    <source>
        <strain>Berkeley</strain>
        <tissue>Ovary</tissue>
        <tissue>Testis</tissue>
    </source>
</reference>
<reference key="4">
    <citation type="journal article" date="2006" name="Circ. Res.">
        <title>Embryonic growth-associated protein is one subunit of a novel N-terminal acetyltransferase complex essential for embryonic vascular development.</title>
        <authorList>
            <person name="Wenzlau J.M."/>
            <person name="Garl P.J."/>
            <person name="Simpson P."/>
            <person name="Stenmark K.R."/>
            <person name="West J."/>
            <person name="Artinger K.B."/>
            <person name="Nemenoff R.A."/>
            <person name="Weiser-Evans M.C.M."/>
        </authorList>
    </citation>
    <scope>IDENTIFICATION</scope>
</reference>
<reference key="5">
    <citation type="journal article" date="2023" name="Nat. Commun.">
        <title>N-terminal acetylation shields proteins from degradation and promotes age-dependent motility and longevity.</title>
        <authorList>
            <person name="Varland S."/>
            <person name="Silva R.D."/>
            <person name="Kjosaas I."/>
            <person name="Faustino A."/>
            <person name="Bogaert A."/>
            <person name="Billmann M."/>
            <person name="Boukhatmi H."/>
            <person name="Kellen B."/>
            <person name="Costanzo M."/>
            <person name="Drazic A."/>
            <person name="Osberg C."/>
            <person name="Chan K."/>
            <person name="Zhang X."/>
            <person name="Tong A.H.Y."/>
            <person name="Andreazza S."/>
            <person name="Lee J.J."/>
            <person name="Nedyalkova L."/>
            <person name="Usaj M."/>
            <person name="Whitworth A.J."/>
            <person name="Andrews B.J."/>
            <person name="Moffat J."/>
            <person name="Myers C.L."/>
            <person name="Gevaert K."/>
            <person name="Boone C."/>
            <person name="Martinho R.G."/>
            <person name="Arnesen T."/>
        </authorList>
    </citation>
    <scope>IDENTIFICATION IN THE NATC COMPLEX</scope>
</reference>
<sequence length="784" mass="89204">MYPSTLPAEADPSTMNGSSVAEPPDFQAATAAAAAAARASSLEQDEWSVGECGFLDPDVQRTMRSGSAAEDITQYPMHGWVDVTKEFHDACAELQPGELAQDMLFGLFEAMSAIEIMDPKMDVGMGFDKQDLPPPSFEAAIATGAIKLDDLTPSELIGIYDALFSCLVSWLEGNSMDQVLFTCLYLHAPAQIKDKALRVFCTAVRNLIVVIKKIIAVAAVNEEEDFQLYGNSALLAAEKAQPATVYSSLKDVEDELIRKCKKLTSTEDWMAVVHRLRFMRHLFQVIYHVEQMASNDTVDDKVDIYKILLVASEMLPGIRNTLDRGTQPEKGSDAPNPMGFSPRIHDRSQPPAFPRSIKIRDRPSSYQFLEEMISRFKYACKVTKYKDYYSALNFFIEYSKKSGQCILSRSVLQTLFSANMRMAHGKLPMKQFLRHSVQVFNSPPVLNAKHPVAADPKVQQHLENFFRYCINMNTFTQFIRICGFNRARQRDKLARLIENFDTIQVDAARLDSMMNQLANERAMEGNEPMATALKHSTHFSTWVLYNCFRAMLIFLMSGFELELYAVHEFLYIYWYPYEFLIGFLVSALTRTENILLAQEEYAEHQSKTQSGGSGAAKNRKAAKPKKNKKTQRPYRAEIVFYHALLSLCGGMYKAMGALTKDGRVRLPLSKFDNEEIRYNRRFLPFATLTSPPPVSYAEFKNVREHMMRHSVEDLYTYAAKHFDQARNVLESIQNPDQEMLDLLQIARTNFVVMNVLARGHQKEVKRQPEFDFSKHSYFPIIKLK</sequence>
<feature type="chain" id="PRO_0000308621" description="N-alpha-acetyltransferase 35, NatC auxiliary subunit homolog">
    <location>
        <begin position="1"/>
        <end position="784"/>
    </location>
</feature>
<feature type="region of interest" description="Disordered" evidence="2">
    <location>
        <begin position="1"/>
        <end position="23"/>
    </location>
</feature>
<feature type="region of interest" description="Disordered" evidence="2">
    <location>
        <begin position="320"/>
        <end position="353"/>
    </location>
</feature>
<feature type="region of interest" description="Disordered" evidence="2">
    <location>
        <begin position="606"/>
        <end position="630"/>
    </location>
</feature>
<feature type="compositionally biased region" description="Basic residues" evidence="2">
    <location>
        <begin position="617"/>
        <end position="630"/>
    </location>
</feature>
<feature type="splice variant" id="VSP_029040" description="In isoform B." evidence="4">
    <location>
        <position position="18"/>
    </location>
</feature>
<gene>
    <name evidence="6" type="primary">Naa35</name>
    <name type="ORF">CG4065</name>
</gene>
<name>NAA35_DROME</name>